<comment type="function">
    <text evidence="4">Required for the assembly of axonemal inner and outer dynein arms. Involved in preassembly of dyneins into complexes before their transport into cilia.</text>
</comment>
<comment type="subcellular location">
    <subcellularLocation>
        <location evidence="1">Cytoplasm</location>
    </subcellularLocation>
    <subcellularLocation>
        <location evidence="2">Dynein axonemal particle</location>
    </subcellularLocation>
</comment>
<comment type="alternative products">
    <event type="alternative splicing"/>
    <isoform>
        <id>Q8N9W5-1</id>
        <name>1</name>
        <sequence type="displayed"/>
    </isoform>
    <isoform>
        <id>Q8N9W5-5</id>
        <name>2</name>
        <sequence type="described" ref="VSP_039967 VSP_039968"/>
    </isoform>
    <isoform>
        <id>Q8N9W5-3</id>
        <name>3</name>
        <sequence type="described" ref="VSP_042976 VSP_039966 VSP_039969"/>
    </isoform>
    <isoform>
        <id>Q8N9W5-6</id>
        <name>4</name>
        <sequence type="described" ref="VSP_042976"/>
    </isoform>
    <isoform>
        <id>Q8N9W5-7</id>
        <name>5</name>
        <sequence type="described" ref="VSP_055742"/>
    </isoform>
</comment>
<comment type="disease" evidence="4">
    <disease id="DI-03362">
        <name>Ciliary dyskinesia, primary, 2</name>
        <acronym>CILD2</acronym>
        <description>A disorder characterized by abnormalities of motile cilia. Respiratory infections leading to chronic inflammation and bronchiectasis are recurrent, due to defects in the respiratory cilia; reduced fertility is often observed in male patients due to abnormalities of sperm tails. Half of the patients exhibit randomization of left-right body asymmetry and situs inversus, due to dysfunction of monocilia at the embryonic node. Primary ciliary dyskinesia associated with situs inversus is referred to as Kartagener syndrome.</description>
        <dbReference type="MIM" id="606763"/>
    </disease>
    <text>The disease is caused by variants affecting the gene represented in this entry.</text>
</comment>
<comment type="miscellaneous">
    <molecule>Isoform 2</molecule>
    <text evidence="7">May be produced at very low levels due to a premature stop codon in the mRNA, leading to nonsense-mediated mRNA decay.</text>
</comment>
<comment type="similarity">
    <text evidence="7">Belongs to the DNAAF3 family.</text>
</comment>
<comment type="sequence caution" evidence="7">
    <conflict type="miscellaneous discrepancy">
        <sequence resource="EMBL-CDS" id="BAC04177"/>
    </conflict>
    <text>Probable cloning artifact.</text>
</comment>
<sequence length="541" mass="59410">MTTPAGSGSGFGSVSWWGLSPALDLQAESPPVDPDSQADTVHSNPELDVLLLGSVDGRHLLRTLSRAKFWPRRRFNFFVLENNLEAVARHMLIFSLALEEPEKMGLQERSETFLEVWGNALLRPPVAAFVRAQADLLAHLVPEPDRLEEQLPWLSLRALKFRERDALEAVFRFWAGGEKGPQAFPMSRLWDSRLRHYLGSRYDARRGVSDWDLRMKLHDRGAQVIHPQEFRRWRDTGVAFELRDSSAYHVPNRTLASGRLLSYRGERVAARGYWGDIATGPFVAFGIEADDESLLRTSNGQPVKTAGEITQHNVTELLRDVAAWGRARATGGDLEEQQHAEGSPEPGTPAAPTPESFTVHFLPLNSAQTLHHKSCYNGRFQLLYVACGMVHLLIPELGACVAPGGNLIVELARYLVDVRQEQLQGFNTRVRELAQAAGFAPQTGARPSETFARFCKSQESALGNTVPAVEPGTPPLDILAQPLEASNPALEGLTQPLQGGTPHCEPCQLPSESPGSLSEVLAQPQGALAPPNCESDSKTGV</sequence>
<evidence type="ECO:0000250" key="1"/>
<evidence type="ECO:0000250" key="2">
    <source>
        <dbReference type="UniProtKB" id="Q32NQ7"/>
    </source>
</evidence>
<evidence type="ECO:0000256" key="3">
    <source>
        <dbReference type="SAM" id="MobiDB-lite"/>
    </source>
</evidence>
<evidence type="ECO:0000269" key="4">
    <source>
    </source>
</evidence>
<evidence type="ECO:0000303" key="5">
    <source>
    </source>
</evidence>
<evidence type="ECO:0000303" key="6">
    <source>
    </source>
</evidence>
<evidence type="ECO:0000305" key="7"/>
<reference key="1">
    <citation type="journal article" date="2004" name="Nat. Genet.">
        <title>Complete sequencing and characterization of 21,243 full-length human cDNAs.</title>
        <authorList>
            <person name="Ota T."/>
            <person name="Suzuki Y."/>
            <person name="Nishikawa T."/>
            <person name="Otsuki T."/>
            <person name="Sugiyama T."/>
            <person name="Irie R."/>
            <person name="Wakamatsu A."/>
            <person name="Hayashi K."/>
            <person name="Sato H."/>
            <person name="Nagai K."/>
            <person name="Kimura K."/>
            <person name="Makita H."/>
            <person name="Sekine M."/>
            <person name="Obayashi M."/>
            <person name="Nishi T."/>
            <person name="Shibahara T."/>
            <person name="Tanaka T."/>
            <person name="Ishii S."/>
            <person name="Yamamoto J."/>
            <person name="Saito K."/>
            <person name="Kawai Y."/>
            <person name="Isono Y."/>
            <person name="Nakamura Y."/>
            <person name="Nagahari K."/>
            <person name="Murakami K."/>
            <person name="Yasuda T."/>
            <person name="Iwayanagi T."/>
            <person name="Wagatsuma M."/>
            <person name="Shiratori A."/>
            <person name="Sudo H."/>
            <person name="Hosoiri T."/>
            <person name="Kaku Y."/>
            <person name="Kodaira H."/>
            <person name="Kondo H."/>
            <person name="Sugawara M."/>
            <person name="Takahashi M."/>
            <person name="Kanda K."/>
            <person name="Yokoi T."/>
            <person name="Furuya T."/>
            <person name="Kikkawa E."/>
            <person name="Omura Y."/>
            <person name="Abe K."/>
            <person name="Kamihara K."/>
            <person name="Katsuta N."/>
            <person name="Sato K."/>
            <person name="Tanikawa M."/>
            <person name="Yamazaki M."/>
            <person name="Ninomiya K."/>
            <person name="Ishibashi T."/>
            <person name="Yamashita H."/>
            <person name="Murakawa K."/>
            <person name="Fujimori K."/>
            <person name="Tanai H."/>
            <person name="Kimata M."/>
            <person name="Watanabe M."/>
            <person name="Hiraoka S."/>
            <person name="Chiba Y."/>
            <person name="Ishida S."/>
            <person name="Ono Y."/>
            <person name="Takiguchi S."/>
            <person name="Watanabe S."/>
            <person name="Yosida M."/>
            <person name="Hotuta T."/>
            <person name="Kusano J."/>
            <person name="Kanehori K."/>
            <person name="Takahashi-Fujii A."/>
            <person name="Hara H."/>
            <person name="Tanase T.-O."/>
            <person name="Nomura Y."/>
            <person name="Togiya S."/>
            <person name="Komai F."/>
            <person name="Hara R."/>
            <person name="Takeuchi K."/>
            <person name="Arita M."/>
            <person name="Imose N."/>
            <person name="Musashino K."/>
            <person name="Yuuki H."/>
            <person name="Oshima A."/>
            <person name="Sasaki N."/>
            <person name="Aotsuka S."/>
            <person name="Yoshikawa Y."/>
            <person name="Matsunawa H."/>
            <person name="Ichihara T."/>
            <person name="Shiohata N."/>
            <person name="Sano S."/>
            <person name="Moriya S."/>
            <person name="Momiyama H."/>
            <person name="Satoh N."/>
            <person name="Takami S."/>
            <person name="Terashima Y."/>
            <person name="Suzuki O."/>
            <person name="Nakagawa S."/>
            <person name="Senoh A."/>
            <person name="Mizoguchi H."/>
            <person name="Goto Y."/>
            <person name="Shimizu F."/>
            <person name="Wakebe H."/>
            <person name="Hishigaki H."/>
            <person name="Watanabe T."/>
            <person name="Sugiyama A."/>
            <person name="Takemoto M."/>
            <person name="Kawakami B."/>
            <person name="Yamazaki M."/>
            <person name="Watanabe K."/>
            <person name="Kumagai A."/>
            <person name="Itakura S."/>
            <person name="Fukuzumi Y."/>
            <person name="Fujimori Y."/>
            <person name="Komiyama M."/>
            <person name="Tashiro H."/>
            <person name="Tanigami A."/>
            <person name="Fujiwara T."/>
            <person name="Ono T."/>
            <person name="Yamada K."/>
            <person name="Fujii Y."/>
            <person name="Ozaki K."/>
            <person name="Hirao M."/>
            <person name="Ohmori Y."/>
            <person name="Kawabata A."/>
            <person name="Hikiji T."/>
            <person name="Kobatake N."/>
            <person name="Inagaki H."/>
            <person name="Ikema Y."/>
            <person name="Okamoto S."/>
            <person name="Okitani R."/>
            <person name="Kawakami T."/>
            <person name="Noguchi S."/>
            <person name="Itoh T."/>
            <person name="Shigeta K."/>
            <person name="Senba T."/>
            <person name="Matsumura K."/>
            <person name="Nakajima Y."/>
            <person name="Mizuno T."/>
            <person name="Morinaga M."/>
            <person name="Sasaki M."/>
            <person name="Togashi T."/>
            <person name="Oyama M."/>
            <person name="Hata H."/>
            <person name="Watanabe M."/>
            <person name="Komatsu T."/>
            <person name="Mizushima-Sugano J."/>
            <person name="Satoh T."/>
            <person name="Shirai Y."/>
            <person name="Takahashi Y."/>
            <person name="Nakagawa K."/>
            <person name="Okumura K."/>
            <person name="Nagase T."/>
            <person name="Nomura N."/>
            <person name="Kikuchi H."/>
            <person name="Masuho Y."/>
            <person name="Yamashita R."/>
            <person name="Nakai K."/>
            <person name="Yada T."/>
            <person name="Nakamura Y."/>
            <person name="Ohara O."/>
            <person name="Isogai T."/>
            <person name="Sugano S."/>
        </authorList>
    </citation>
    <scope>NUCLEOTIDE SEQUENCE [LARGE SCALE MRNA] (ISOFORMS 1 AND 3)</scope>
    <source>
        <tissue>Testis</tissue>
    </source>
</reference>
<reference key="2">
    <citation type="journal article" date="2004" name="Nature">
        <title>The DNA sequence and biology of human chromosome 19.</title>
        <authorList>
            <person name="Grimwood J."/>
            <person name="Gordon L.A."/>
            <person name="Olsen A.S."/>
            <person name="Terry A."/>
            <person name="Schmutz J."/>
            <person name="Lamerdin J.E."/>
            <person name="Hellsten U."/>
            <person name="Goodstein D."/>
            <person name="Couronne O."/>
            <person name="Tran-Gyamfi M."/>
            <person name="Aerts A."/>
            <person name="Altherr M."/>
            <person name="Ashworth L."/>
            <person name="Bajorek E."/>
            <person name="Black S."/>
            <person name="Branscomb E."/>
            <person name="Caenepeel S."/>
            <person name="Carrano A.V."/>
            <person name="Caoile C."/>
            <person name="Chan Y.M."/>
            <person name="Christensen M."/>
            <person name="Cleland C.A."/>
            <person name="Copeland A."/>
            <person name="Dalin E."/>
            <person name="Dehal P."/>
            <person name="Denys M."/>
            <person name="Detter J.C."/>
            <person name="Escobar J."/>
            <person name="Flowers D."/>
            <person name="Fotopulos D."/>
            <person name="Garcia C."/>
            <person name="Georgescu A.M."/>
            <person name="Glavina T."/>
            <person name="Gomez M."/>
            <person name="Gonzales E."/>
            <person name="Groza M."/>
            <person name="Hammon N."/>
            <person name="Hawkins T."/>
            <person name="Haydu L."/>
            <person name="Ho I."/>
            <person name="Huang W."/>
            <person name="Israni S."/>
            <person name="Jett J."/>
            <person name="Kadner K."/>
            <person name="Kimball H."/>
            <person name="Kobayashi A."/>
            <person name="Larionov V."/>
            <person name="Leem S.-H."/>
            <person name="Lopez F."/>
            <person name="Lou Y."/>
            <person name="Lowry S."/>
            <person name="Malfatti S."/>
            <person name="Martinez D."/>
            <person name="McCready P.M."/>
            <person name="Medina C."/>
            <person name="Morgan J."/>
            <person name="Nelson K."/>
            <person name="Nolan M."/>
            <person name="Ovcharenko I."/>
            <person name="Pitluck S."/>
            <person name="Pollard M."/>
            <person name="Popkie A.P."/>
            <person name="Predki P."/>
            <person name="Quan G."/>
            <person name="Ramirez L."/>
            <person name="Rash S."/>
            <person name="Retterer J."/>
            <person name="Rodriguez A."/>
            <person name="Rogers S."/>
            <person name="Salamov A."/>
            <person name="Salazar A."/>
            <person name="She X."/>
            <person name="Smith D."/>
            <person name="Slezak T."/>
            <person name="Solovyev V."/>
            <person name="Thayer N."/>
            <person name="Tice H."/>
            <person name="Tsai M."/>
            <person name="Ustaszewska A."/>
            <person name="Vo N."/>
            <person name="Wagner M."/>
            <person name="Wheeler J."/>
            <person name="Wu K."/>
            <person name="Xie G."/>
            <person name="Yang J."/>
            <person name="Dubchak I."/>
            <person name="Furey T.S."/>
            <person name="DeJong P."/>
            <person name="Dickson M."/>
            <person name="Gordon D."/>
            <person name="Eichler E.E."/>
            <person name="Pennacchio L.A."/>
            <person name="Richardson P."/>
            <person name="Stubbs L."/>
            <person name="Rokhsar D.S."/>
            <person name="Myers R.M."/>
            <person name="Rubin E.M."/>
            <person name="Lucas S.M."/>
        </authorList>
    </citation>
    <scope>NUCLEOTIDE SEQUENCE [LARGE SCALE GENOMIC DNA]</scope>
</reference>
<reference key="3">
    <citation type="journal article" date="2004" name="Genome Res.">
        <title>The status, quality, and expansion of the NIH full-length cDNA project: the Mammalian Gene Collection (MGC).</title>
        <authorList>
            <consortium name="The MGC Project Team"/>
        </authorList>
    </citation>
    <scope>NUCLEOTIDE SEQUENCE [LARGE SCALE MRNA] (ISOFORMS 1 AND 5)</scope>
    <source>
        <tissue>Brain</tissue>
        <tissue>Pancreas</tissue>
    </source>
</reference>
<reference key="4">
    <citation type="journal article" date="2012" name="Nat. Genet.">
        <title>Mutations in axonemal dynein assembly factor DNAAF3 cause primary ciliary dyskinesia.</title>
        <authorList>
            <person name="Mitchison H.M."/>
            <person name="Schmidts M."/>
            <person name="Loges N.T."/>
            <person name="Freshour J."/>
            <person name="Dritsoula A."/>
            <person name="Hirst R.A."/>
            <person name="O'Callaghan C."/>
            <person name="Blau H."/>
            <person name="Al Dabbagh M."/>
            <person name="Olbrich H."/>
            <person name="Beales P.L."/>
            <person name="Yagi T."/>
            <person name="Mussaffi H."/>
            <person name="Chung E.M."/>
            <person name="Omran H."/>
            <person name="Mitchell D.R."/>
        </authorList>
    </citation>
    <scope>VARIANT CILD2 PRO-61</scope>
    <scope>VARIANT THR-278</scope>
    <scope>FUNCTION</scope>
</reference>
<keyword id="KW-0025">Alternative splicing</keyword>
<keyword id="KW-1186">Ciliopathy</keyword>
<keyword id="KW-0970">Cilium biogenesis/degradation</keyword>
<keyword id="KW-0963">Cytoplasm</keyword>
<keyword id="KW-0225">Disease variant</keyword>
<keyword id="KW-1012">Kartagener syndrome</keyword>
<keyword id="KW-0990">Primary ciliary dyskinesia</keyword>
<keyword id="KW-1267">Proteomics identification</keyword>
<keyword id="KW-1185">Reference proteome</keyword>
<protein>
    <recommendedName>
        <fullName>Dynein axonemal assembly factor 3</fullName>
    </recommendedName>
</protein>
<dbReference type="EMBL" id="AK093458">
    <property type="protein sequence ID" value="BAC04172.1"/>
    <property type="molecule type" value="mRNA"/>
</dbReference>
<dbReference type="EMBL" id="AK093473">
    <property type="protein sequence ID" value="BAC04177.1"/>
    <property type="status" value="ALT_SEQ"/>
    <property type="molecule type" value="mRNA"/>
</dbReference>
<dbReference type="EMBL" id="AK097388">
    <property type="protein sequence ID" value="BAC05029.1"/>
    <property type="molecule type" value="mRNA"/>
</dbReference>
<dbReference type="EMBL" id="AC010327">
    <property type="status" value="NOT_ANNOTATED_CDS"/>
    <property type="molecule type" value="Genomic_DNA"/>
</dbReference>
<dbReference type="EMBL" id="BC016843">
    <property type="protein sequence ID" value="AAH16843.1"/>
    <property type="molecule type" value="mRNA"/>
</dbReference>
<dbReference type="EMBL" id="BC063449">
    <property type="protein sequence ID" value="AAH63449.1"/>
    <property type="molecule type" value="mRNA"/>
</dbReference>
<dbReference type="CCDS" id="CCDS12918.2">
    <molecule id="Q8N9W5-6"/>
</dbReference>
<dbReference type="CCDS" id="CCDS58679.1">
    <molecule id="Q8N9W5-7"/>
</dbReference>
<dbReference type="CCDS" id="CCDS58680.1">
    <molecule id="Q8N9W5-3"/>
</dbReference>
<dbReference type="CCDS" id="CCDS59422.1">
    <molecule id="Q8N9W5-1"/>
</dbReference>
<dbReference type="RefSeq" id="NP_001243643.1">
    <molecule id="Q8N9W5-3"/>
    <property type="nucleotide sequence ID" value="NM_001256714.1"/>
</dbReference>
<dbReference type="RefSeq" id="NP_001243644.1">
    <molecule id="Q8N9W5-1"/>
    <property type="nucleotide sequence ID" value="NM_001256715.2"/>
</dbReference>
<dbReference type="RefSeq" id="NP_001243645.1">
    <molecule id="Q8N9W5-7"/>
    <property type="nucleotide sequence ID" value="NM_001256716.2"/>
</dbReference>
<dbReference type="RefSeq" id="NP_849159.2">
    <molecule id="Q8N9W5-6"/>
    <property type="nucleotide sequence ID" value="NM_178837.4"/>
</dbReference>
<dbReference type="BioGRID" id="131582">
    <property type="interactions" value="5"/>
</dbReference>
<dbReference type="FunCoup" id="Q8N9W5">
    <property type="interactions" value="17"/>
</dbReference>
<dbReference type="IntAct" id="Q8N9W5">
    <property type="interactions" value="3"/>
</dbReference>
<dbReference type="STRING" id="9606.ENSP00000436975"/>
<dbReference type="GlyGen" id="Q8N9W5">
    <property type="glycosylation" value="2 sites"/>
</dbReference>
<dbReference type="iPTMnet" id="Q8N9W5"/>
<dbReference type="PhosphoSitePlus" id="Q8N9W5"/>
<dbReference type="BioMuta" id="DNAAF3"/>
<dbReference type="DMDM" id="229462985"/>
<dbReference type="jPOST" id="Q8N9W5"/>
<dbReference type="MassIVE" id="Q8N9W5"/>
<dbReference type="PaxDb" id="9606-ENSP00000436975"/>
<dbReference type="PeptideAtlas" id="Q8N9W5"/>
<dbReference type="ProteomicsDB" id="15295"/>
<dbReference type="ProteomicsDB" id="72595">
    <molecule id="Q8N9W5-1"/>
</dbReference>
<dbReference type="ProteomicsDB" id="72596">
    <molecule id="Q8N9W5-3"/>
</dbReference>
<dbReference type="ProteomicsDB" id="72598">
    <molecule id="Q8N9W5-6"/>
</dbReference>
<dbReference type="Antibodypedia" id="50890">
    <property type="antibodies" value="89 antibodies from 14 providers"/>
</dbReference>
<dbReference type="DNASU" id="352909"/>
<dbReference type="Ensembl" id="ENST00000391720.8">
    <molecule id="Q8N9W5-6"/>
    <property type="protein sequence ID" value="ENSP00000375600.5"/>
    <property type="gene ID" value="ENSG00000167646.14"/>
</dbReference>
<dbReference type="Ensembl" id="ENST00000455045.5">
    <molecule id="Q8N9W5-7"/>
    <property type="protein sequence ID" value="ENSP00000394343.1"/>
    <property type="gene ID" value="ENSG00000167646.14"/>
</dbReference>
<dbReference type="Ensembl" id="ENST00000524407.7">
    <molecule id="Q8N9W5-1"/>
    <property type="protein sequence ID" value="ENSP00000432046.3"/>
    <property type="gene ID" value="ENSG00000167646.14"/>
</dbReference>
<dbReference type="Ensembl" id="ENST00000527223.6">
    <molecule id="Q8N9W5-3"/>
    <property type="protein sequence ID" value="ENSP00000436975.2"/>
    <property type="gene ID" value="ENSG00000167646.14"/>
</dbReference>
<dbReference type="Ensembl" id="ENST00000528412.5">
    <molecule id="Q8N9W5-5"/>
    <property type="protein sequence ID" value="ENSP00000433826.2"/>
    <property type="gene ID" value="ENSG00000167646.14"/>
</dbReference>
<dbReference type="Ensembl" id="ENST00000534214.1">
    <molecule id="Q8N9W5-5"/>
    <property type="protein sequence ID" value="ENSP00000433247.2"/>
    <property type="gene ID" value="ENSG00000167646.14"/>
</dbReference>
<dbReference type="GeneID" id="352909"/>
<dbReference type="KEGG" id="hsa:352909"/>
<dbReference type="MANE-Select" id="ENST00000524407.7">
    <property type="protein sequence ID" value="ENSP00000432046.3"/>
    <property type="RefSeq nucleotide sequence ID" value="NM_001256715.2"/>
    <property type="RefSeq protein sequence ID" value="NP_001243644.1"/>
</dbReference>
<dbReference type="UCSC" id="uc002qji.3">
    <molecule id="Q8N9W5-1"/>
    <property type="organism name" value="human"/>
</dbReference>
<dbReference type="AGR" id="HGNC:30492"/>
<dbReference type="CTD" id="352909"/>
<dbReference type="DisGeNET" id="352909"/>
<dbReference type="GeneCards" id="DNAAF3"/>
<dbReference type="GeneReviews" id="DNAAF3"/>
<dbReference type="HGNC" id="HGNC:30492">
    <property type="gene designation" value="DNAAF3"/>
</dbReference>
<dbReference type="HPA" id="ENSG00000167646">
    <property type="expression patterns" value="Group enriched (fallopian tube, testis)"/>
</dbReference>
<dbReference type="MalaCards" id="DNAAF3"/>
<dbReference type="MIM" id="606763">
    <property type="type" value="phenotype"/>
</dbReference>
<dbReference type="MIM" id="614566">
    <property type="type" value="gene"/>
</dbReference>
<dbReference type="neXtProt" id="NX_Q8N9W5"/>
<dbReference type="OpenTargets" id="ENSG00000167646"/>
<dbReference type="Orphanet" id="244">
    <property type="disease" value="Primary ciliary dyskinesia"/>
</dbReference>
<dbReference type="PharmGKB" id="PA147358371"/>
<dbReference type="VEuPathDB" id="HostDB:ENSG00000167646"/>
<dbReference type="eggNOG" id="ENOG502QT97">
    <property type="taxonomic scope" value="Eukaryota"/>
</dbReference>
<dbReference type="GeneTree" id="ENSGT00390000002069"/>
<dbReference type="HOGENOM" id="CLU_156270_0_0_1"/>
<dbReference type="InParanoid" id="Q8N9W5"/>
<dbReference type="OMA" id="MREGIYQ"/>
<dbReference type="OrthoDB" id="538817at2759"/>
<dbReference type="PAN-GO" id="Q8N9W5">
    <property type="GO annotations" value="2 GO annotations based on evolutionary models"/>
</dbReference>
<dbReference type="PhylomeDB" id="Q8N9W5"/>
<dbReference type="PathwayCommons" id="Q8N9W5"/>
<dbReference type="SignaLink" id="Q8N9W5"/>
<dbReference type="BioGRID-ORCS" id="352909">
    <property type="hits" value="10 hits in 1155 CRISPR screens"/>
</dbReference>
<dbReference type="GenomeRNAi" id="352909"/>
<dbReference type="Pharos" id="Q8N9W5">
    <property type="development level" value="Tbio"/>
</dbReference>
<dbReference type="PRO" id="PR:Q8N9W5"/>
<dbReference type="Proteomes" id="UP000005640">
    <property type="component" value="Chromosome 19"/>
</dbReference>
<dbReference type="RNAct" id="Q8N9W5">
    <property type="molecule type" value="protein"/>
</dbReference>
<dbReference type="Bgee" id="ENSG00000167646">
    <property type="expression patterns" value="Expressed in apex of heart and 99 other cell types or tissues"/>
</dbReference>
<dbReference type="ExpressionAtlas" id="Q8N9W5">
    <property type="expression patterns" value="baseline and differential"/>
</dbReference>
<dbReference type="GO" id="GO:0120293">
    <property type="term" value="C:dynein axonemal particle"/>
    <property type="evidence" value="ECO:0000250"/>
    <property type="project" value="UniProtKB"/>
</dbReference>
<dbReference type="GO" id="GO:0005576">
    <property type="term" value="C:extracellular region"/>
    <property type="evidence" value="ECO:0007669"/>
    <property type="project" value="GOC"/>
</dbReference>
<dbReference type="GO" id="GO:0070286">
    <property type="term" value="P:axonemal dynein complex assembly"/>
    <property type="evidence" value="ECO:0000315"/>
    <property type="project" value="UniProtKB"/>
</dbReference>
<dbReference type="GO" id="GO:0007420">
    <property type="term" value="P:brain development"/>
    <property type="evidence" value="ECO:0007669"/>
    <property type="project" value="Ensembl"/>
</dbReference>
<dbReference type="GO" id="GO:0000902">
    <property type="term" value="P:cell morphogenesis"/>
    <property type="evidence" value="ECO:0007669"/>
    <property type="project" value="Ensembl"/>
</dbReference>
<dbReference type="GO" id="GO:0090660">
    <property type="term" value="P:cerebrospinal fluid circulation"/>
    <property type="evidence" value="ECO:0007669"/>
    <property type="project" value="Ensembl"/>
</dbReference>
<dbReference type="GO" id="GO:0008340">
    <property type="term" value="P:determination of adult lifespan"/>
    <property type="evidence" value="ECO:0007669"/>
    <property type="project" value="Ensembl"/>
</dbReference>
<dbReference type="GO" id="GO:0007368">
    <property type="term" value="P:determination of left/right symmetry"/>
    <property type="evidence" value="ECO:0007669"/>
    <property type="project" value="Ensembl"/>
</dbReference>
<dbReference type="GO" id="GO:0007507">
    <property type="term" value="P:heart development"/>
    <property type="evidence" value="ECO:0007669"/>
    <property type="project" value="Ensembl"/>
</dbReference>
<dbReference type="GO" id="GO:0030324">
    <property type="term" value="P:lung development"/>
    <property type="evidence" value="ECO:0007669"/>
    <property type="project" value="Ensembl"/>
</dbReference>
<dbReference type="GO" id="GO:0044458">
    <property type="term" value="P:motile cilium assembly"/>
    <property type="evidence" value="ECO:0000315"/>
    <property type="project" value="UniProtKB"/>
</dbReference>
<dbReference type="GO" id="GO:0035264">
    <property type="term" value="P:multicellular organism growth"/>
    <property type="evidence" value="ECO:0007669"/>
    <property type="project" value="Ensembl"/>
</dbReference>
<dbReference type="GO" id="GO:0072520">
    <property type="term" value="P:seminiferous tubule development"/>
    <property type="evidence" value="ECO:0007669"/>
    <property type="project" value="Ensembl"/>
</dbReference>
<dbReference type="GO" id="GO:0007283">
    <property type="term" value="P:spermatogenesis"/>
    <property type="evidence" value="ECO:0007669"/>
    <property type="project" value="Ensembl"/>
</dbReference>
<dbReference type="InterPro" id="IPR039304">
    <property type="entry name" value="DNAAF3"/>
</dbReference>
<dbReference type="InterPro" id="IPR028235">
    <property type="entry name" value="DNAAF3_C"/>
</dbReference>
<dbReference type="InterPro" id="IPR027974">
    <property type="entry name" value="DUF4470"/>
</dbReference>
<dbReference type="PANTHER" id="PTHR22118">
    <property type="entry name" value="DYNEIN ASSEMBLY FACTOR 3, AXONEMAL"/>
    <property type="match status" value="1"/>
</dbReference>
<dbReference type="PANTHER" id="PTHR22118:SF14">
    <property type="entry name" value="DYNEIN AXONEMAL ASSEMBLY FACTOR 3"/>
    <property type="match status" value="1"/>
</dbReference>
<dbReference type="Pfam" id="PF14737">
    <property type="entry name" value="DUF4470"/>
    <property type="match status" value="1"/>
</dbReference>
<dbReference type="Pfam" id="PF14740">
    <property type="entry name" value="DUF4471"/>
    <property type="match status" value="1"/>
</dbReference>
<name>DAAF3_HUMAN</name>
<feature type="chain" id="PRO_0000297580" description="Dynein axonemal assembly factor 3">
    <location>
        <begin position="1"/>
        <end position="541"/>
    </location>
</feature>
<feature type="region of interest" description="Disordered" evidence="3">
    <location>
        <begin position="332"/>
        <end position="353"/>
    </location>
</feature>
<feature type="region of interest" description="Disordered" evidence="3">
    <location>
        <begin position="490"/>
        <end position="541"/>
    </location>
</feature>
<feature type="splice variant" id="VSP_055742" description="In isoform 5." evidence="6">
    <original>MTTPAGSGSGFGSVSWWGLSPALDLQAESPPVDPDSQADTVHSNPELDVLLLGSVDGRHLLRTLSRAKFWPRRRFN</original>
    <variation>MKMRAQIPESLREEGIEILKPQ</variation>
    <location>
        <begin position="1"/>
        <end position="76"/>
    </location>
</feature>
<feature type="splice variant" id="VSP_042976" description="In isoform 3 and isoform 4." evidence="5">
    <original>M</original>
    <variation>MLPLLDSSKRAGTLGSGCGVPRVHSAALSREEGASRDIWRIKVWARVM</variation>
    <location>
        <position position="1"/>
    </location>
</feature>
<feature type="splice variant" id="VSP_039966" description="In isoform 3." evidence="5">
    <original>S</original>
    <variation>RDATVDALPTTMVPQPAVILPG</variation>
    <location>
        <position position="29"/>
    </location>
</feature>
<feature type="splice variant" id="VSP_039967" description="In isoform 2." evidence="7">
    <original>FFVLENNLEAVARHMLIFS</original>
    <variation>VSWDEDESPDSRVLEGGRD</variation>
    <location>
        <begin position="77"/>
        <end position="95"/>
    </location>
</feature>
<feature type="splice variant" id="VSP_039968" description="In isoform 2." evidence="7">
    <location>
        <begin position="96"/>
        <end position="541"/>
    </location>
</feature>
<feature type="splice variant" id="VSP_039969" description="In isoform 3." evidence="5">
    <location>
        <position position="350"/>
    </location>
</feature>
<feature type="sequence variant" id="VAR_067300" description="In CILD2; dbSNP:rs387907151." evidence="4">
    <original>L</original>
    <variation>P</variation>
    <location>
        <position position="61"/>
    </location>
</feature>
<feature type="sequence variant" id="VAR_067301" description="In dbSNP:rs200775946." evidence="4">
    <original>A</original>
    <variation>T</variation>
    <location>
        <position position="278"/>
    </location>
</feature>
<feature type="sequence variant" id="VAR_055306" description="In dbSNP:rs2365725.">
    <original>E</original>
    <variation>G</variation>
    <location>
        <position position="292"/>
    </location>
</feature>
<feature type="sequence variant" id="VAR_055307" description="In dbSNP:rs7508641.">
    <original>G</original>
    <variation>W</variation>
    <location>
        <position position="331"/>
    </location>
</feature>
<feature type="sequence variant" id="VAR_055308" description="In dbSNP:rs890872.">
    <original>N</original>
    <variation>D</variation>
    <location>
        <position position="365"/>
    </location>
</feature>
<organism>
    <name type="scientific">Homo sapiens</name>
    <name type="common">Human</name>
    <dbReference type="NCBI Taxonomy" id="9606"/>
    <lineage>
        <taxon>Eukaryota</taxon>
        <taxon>Metazoa</taxon>
        <taxon>Chordata</taxon>
        <taxon>Craniata</taxon>
        <taxon>Vertebrata</taxon>
        <taxon>Euteleostomi</taxon>
        <taxon>Mammalia</taxon>
        <taxon>Eutheria</taxon>
        <taxon>Euarchontoglires</taxon>
        <taxon>Primates</taxon>
        <taxon>Haplorrhini</taxon>
        <taxon>Catarrhini</taxon>
        <taxon>Hominidae</taxon>
        <taxon>Homo</taxon>
    </lineage>
</organism>
<gene>
    <name type="primary">DNAAF3</name>
    <name type="synonym">C19orf51</name>
</gene>
<proteinExistence type="evidence at protein level"/>
<accession>Q8N9W5</accession>
<accession>A8MUY0</accession>
<accession>E3W9A1</accession>
<accession>E9PAX5</accession>
<accession>Q6P4F6</accession>
<accession>Q8N9W0</accession>
<accession>Q96AR2</accession>